<sequence>MNYNHKEIEKKWQNYWEENKTFKTNDNLGQKKFYALDMFPYPSGAGLHVGHPEGYTATDIISRYKRMQGYNVLHPMGWDAFGLPAEQYALDTGNDPREFTQKNIQTFKRQIQELGFSYDWDREVNTTDPEYYKWTQWIFIQLYNKGLAYVDEVAVNWCPALGTVLSNEEVVDGVSERGGHPVYRKPMKQWVLKITEYADRLLEDLDELDWPESIKDMQRNWIGRSEGAKVTFKIEQSDQNIEVFTTRPDTIYGTSFLVLSPEHPLVNEITTSDKEQEVKLYQNEASKKSDLERTDLAKEKTGVFTGTFAINPLSGDKLPIWIADYVLSTYGTGAVMAVPGHDERDHEFATKFNLPIIEVIEGGEVQKYAYTGEGKHINSGELDGLENEAAISKAIELLESKGAGEKKVNYKLRDWLFSRQRYWGEPIPIIHWEDGSMTTVPEDELPLLLPETDEIKPSGTGESPLANIDAFVNVIDEKTGMKGRRETNTMPQWAGSCWYYLRYIDPHNEKMIADPEKLKHWLPVDLYIGGVEHAVLHLLYARFWHKVLYDLGVVPTKEPFQKLYNQGMILGEGNEKMSKSKGNVINPDDIVASHGADTLRLYEMFMGPLDAAIAWSEKGLDGSRRFLDRVWRLIITDENSINKKIVDSNNHSLDKVYNQTVKKVTEDFDTLSFNTAISQLMVFINECYKTNEVYKPYIEGFVKMLSPIAPHIGEELWDRLGHENTITYQPWPTFDESLLVDDEVEIVVQVNGKVRAKINIPKDLSKEEMQDLALSNDNVKMSIEGKEVKKVIAVPQKLVNIVAK</sequence>
<gene>
    <name evidence="1" type="primary">leuS</name>
    <name type="ordered locus">SERP1318</name>
</gene>
<organism>
    <name type="scientific">Staphylococcus epidermidis (strain ATCC 35984 / DSM 28319 / BCRC 17069 / CCUG 31568 / BM 3577 / RP62A)</name>
    <dbReference type="NCBI Taxonomy" id="176279"/>
    <lineage>
        <taxon>Bacteria</taxon>
        <taxon>Bacillati</taxon>
        <taxon>Bacillota</taxon>
        <taxon>Bacilli</taxon>
        <taxon>Bacillales</taxon>
        <taxon>Staphylococcaceae</taxon>
        <taxon>Staphylococcus</taxon>
    </lineage>
</organism>
<comment type="catalytic activity">
    <reaction evidence="1">
        <text>tRNA(Leu) + L-leucine + ATP = L-leucyl-tRNA(Leu) + AMP + diphosphate</text>
        <dbReference type="Rhea" id="RHEA:11688"/>
        <dbReference type="Rhea" id="RHEA-COMP:9613"/>
        <dbReference type="Rhea" id="RHEA-COMP:9622"/>
        <dbReference type="ChEBI" id="CHEBI:30616"/>
        <dbReference type="ChEBI" id="CHEBI:33019"/>
        <dbReference type="ChEBI" id="CHEBI:57427"/>
        <dbReference type="ChEBI" id="CHEBI:78442"/>
        <dbReference type="ChEBI" id="CHEBI:78494"/>
        <dbReference type="ChEBI" id="CHEBI:456215"/>
        <dbReference type="EC" id="6.1.1.4"/>
    </reaction>
</comment>
<comment type="subcellular location">
    <subcellularLocation>
        <location evidence="1">Cytoplasm</location>
    </subcellularLocation>
</comment>
<comment type="similarity">
    <text evidence="1">Belongs to the class-I aminoacyl-tRNA synthetase family.</text>
</comment>
<reference key="1">
    <citation type="journal article" date="2005" name="J. Bacteriol.">
        <title>Insights on evolution of virulence and resistance from the complete genome analysis of an early methicillin-resistant Staphylococcus aureus strain and a biofilm-producing methicillin-resistant Staphylococcus epidermidis strain.</title>
        <authorList>
            <person name="Gill S.R."/>
            <person name="Fouts D.E."/>
            <person name="Archer G.L."/>
            <person name="Mongodin E.F."/>
            <person name="DeBoy R.T."/>
            <person name="Ravel J."/>
            <person name="Paulsen I.T."/>
            <person name="Kolonay J.F."/>
            <person name="Brinkac L.M."/>
            <person name="Beanan M.J."/>
            <person name="Dodson R.J."/>
            <person name="Daugherty S.C."/>
            <person name="Madupu R."/>
            <person name="Angiuoli S.V."/>
            <person name="Durkin A.S."/>
            <person name="Haft D.H."/>
            <person name="Vamathevan J.J."/>
            <person name="Khouri H."/>
            <person name="Utterback T.R."/>
            <person name="Lee C."/>
            <person name="Dimitrov G."/>
            <person name="Jiang L."/>
            <person name="Qin H."/>
            <person name="Weidman J."/>
            <person name="Tran K."/>
            <person name="Kang K.H."/>
            <person name="Hance I.R."/>
            <person name="Nelson K.E."/>
            <person name="Fraser C.M."/>
        </authorList>
    </citation>
    <scope>NUCLEOTIDE SEQUENCE [LARGE SCALE GENOMIC DNA]</scope>
    <source>
        <strain>ATCC 35984 / DSM 28319 / BCRC 17069 / CCUG 31568 / BM 3577 / RP62A</strain>
    </source>
</reference>
<keyword id="KW-0030">Aminoacyl-tRNA synthetase</keyword>
<keyword id="KW-0067">ATP-binding</keyword>
<keyword id="KW-0963">Cytoplasm</keyword>
<keyword id="KW-0436">Ligase</keyword>
<keyword id="KW-0547">Nucleotide-binding</keyword>
<keyword id="KW-0648">Protein biosynthesis</keyword>
<keyword id="KW-1185">Reference proteome</keyword>
<proteinExistence type="inferred from homology"/>
<dbReference type="EC" id="6.1.1.4" evidence="1"/>
<dbReference type="EMBL" id="CP000029">
    <property type="protein sequence ID" value="AAW54646.1"/>
    <property type="molecule type" value="Genomic_DNA"/>
</dbReference>
<dbReference type="SMR" id="Q5HNF1"/>
<dbReference type="STRING" id="176279.SERP1318"/>
<dbReference type="KEGG" id="ser:SERP1318"/>
<dbReference type="eggNOG" id="COG0495">
    <property type="taxonomic scope" value="Bacteria"/>
</dbReference>
<dbReference type="HOGENOM" id="CLU_004427_0_0_9"/>
<dbReference type="Proteomes" id="UP000000531">
    <property type="component" value="Chromosome"/>
</dbReference>
<dbReference type="GO" id="GO:0005829">
    <property type="term" value="C:cytosol"/>
    <property type="evidence" value="ECO:0007669"/>
    <property type="project" value="TreeGrafter"/>
</dbReference>
<dbReference type="GO" id="GO:0002161">
    <property type="term" value="F:aminoacyl-tRNA deacylase activity"/>
    <property type="evidence" value="ECO:0007669"/>
    <property type="project" value="InterPro"/>
</dbReference>
<dbReference type="GO" id="GO:0005524">
    <property type="term" value="F:ATP binding"/>
    <property type="evidence" value="ECO:0007669"/>
    <property type="project" value="UniProtKB-UniRule"/>
</dbReference>
<dbReference type="GO" id="GO:0004823">
    <property type="term" value="F:leucine-tRNA ligase activity"/>
    <property type="evidence" value="ECO:0007669"/>
    <property type="project" value="UniProtKB-UniRule"/>
</dbReference>
<dbReference type="GO" id="GO:0006429">
    <property type="term" value="P:leucyl-tRNA aminoacylation"/>
    <property type="evidence" value="ECO:0007669"/>
    <property type="project" value="UniProtKB-UniRule"/>
</dbReference>
<dbReference type="CDD" id="cd07958">
    <property type="entry name" value="Anticodon_Ia_Leu_BEm"/>
    <property type="match status" value="1"/>
</dbReference>
<dbReference type="CDD" id="cd00812">
    <property type="entry name" value="LeuRS_core"/>
    <property type="match status" value="1"/>
</dbReference>
<dbReference type="FunFam" id="1.10.730.10:FF:000012">
    <property type="entry name" value="Leucine--tRNA ligase"/>
    <property type="match status" value="1"/>
</dbReference>
<dbReference type="FunFam" id="3.10.20.590:FF:000001">
    <property type="entry name" value="Leucine--tRNA ligase"/>
    <property type="match status" value="1"/>
</dbReference>
<dbReference type="FunFam" id="3.40.50.620:FF:000056">
    <property type="entry name" value="Leucine--tRNA ligase"/>
    <property type="match status" value="1"/>
</dbReference>
<dbReference type="FunFam" id="3.40.50.620:FF:000077">
    <property type="entry name" value="Leucine--tRNA ligase"/>
    <property type="match status" value="1"/>
</dbReference>
<dbReference type="FunFam" id="1.10.730.10:FF:000011">
    <property type="entry name" value="Leucine--tRNA ligase chloroplastic/mitochondrial"/>
    <property type="match status" value="1"/>
</dbReference>
<dbReference type="Gene3D" id="3.10.20.590">
    <property type="match status" value="1"/>
</dbReference>
<dbReference type="Gene3D" id="3.40.50.620">
    <property type="entry name" value="HUPs"/>
    <property type="match status" value="2"/>
</dbReference>
<dbReference type="Gene3D" id="1.10.730.10">
    <property type="entry name" value="Isoleucyl-tRNA Synthetase, Domain 1"/>
    <property type="match status" value="1"/>
</dbReference>
<dbReference type="HAMAP" id="MF_00049_B">
    <property type="entry name" value="Leu_tRNA_synth_B"/>
    <property type="match status" value="1"/>
</dbReference>
<dbReference type="InterPro" id="IPR001412">
    <property type="entry name" value="aa-tRNA-synth_I_CS"/>
</dbReference>
<dbReference type="InterPro" id="IPR002300">
    <property type="entry name" value="aa-tRNA-synth_Ia"/>
</dbReference>
<dbReference type="InterPro" id="IPR002302">
    <property type="entry name" value="Leu-tRNA-ligase"/>
</dbReference>
<dbReference type="InterPro" id="IPR025709">
    <property type="entry name" value="Leu_tRNA-synth_edit"/>
</dbReference>
<dbReference type="InterPro" id="IPR013155">
    <property type="entry name" value="M/V/L/I-tRNA-synth_anticd-bd"/>
</dbReference>
<dbReference type="InterPro" id="IPR015413">
    <property type="entry name" value="Methionyl/Leucyl_tRNA_Synth"/>
</dbReference>
<dbReference type="InterPro" id="IPR014729">
    <property type="entry name" value="Rossmann-like_a/b/a_fold"/>
</dbReference>
<dbReference type="InterPro" id="IPR009080">
    <property type="entry name" value="tRNAsynth_Ia_anticodon-bd"/>
</dbReference>
<dbReference type="InterPro" id="IPR009008">
    <property type="entry name" value="Val/Leu/Ile-tRNA-synth_edit"/>
</dbReference>
<dbReference type="NCBIfam" id="TIGR00396">
    <property type="entry name" value="leuS_bact"/>
    <property type="match status" value="1"/>
</dbReference>
<dbReference type="PANTHER" id="PTHR43740:SF2">
    <property type="entry name" value="LEUCINE--TRNA LIGASE, MITOCHONDRIAL"/>
    <property type="match status" value="1"/>
</dbReference>
<dbReference type="PANTHER" id="PTHR43740">
    <property type="entry name" value="LEUCYL-TRNA SYNTHETASE"/>
    <property type="match status" value="1"/>
</dbReference>
<dbReference type="Pfam" id="PF08264">
    <property type="entry name" value="Anticodon_1"/>
    <property type="match status" value="1"/>
</dbReference>
<dbReference type="Pfam" id="PF00133">
    <property type="entry name" value="tRNA-synt_1"/>
    <property type="match status" value="1"/>
</dbReference>
<dbReference type="Pfam" id="PF13603">
    <property type="entry name" value="tRNA-synt_1_2"/>
    <property type="match status" value="1"/>
</dbReference>
<dbReference type="Pfam" id="PF09334">
    <property type="entry name" value="tRNA-synt_1g"/>
    <property type="match status" value="1"/>
</dbReference>
<dbReference type="PRINTS" id="PR00985">
    <property type="entry name" value="TRNASYNTHLEU"/>
</dbReference>
<dbReference type="SUPFAM" id="SSF47323">
    <property type="entry name" value="Anticodon-binding domain of a subclass of class I aminoacyl-tRNA synthetases"/>
    <property type="match status" value="1"/>
</dbReference>
<dbReference type="SUPFAM" id="SSF52374">
    <property type="entry name" value="Nucleotidylyl transferase"/>
    <property type="match status" value="1"/>
</dbReference>
<dbReference type="SUPFAM" id="SSF50677">
    <property type="entry name" value="ValRS/IleRS/LeuRS editing domain"/>
    <property type="match status" value="1"/>
</dbReference>
<dbReference type="PROSITE" id="PS00178">
    <property type="entry name" value="AA_TRNA_LIGASE_I"/>
    <property type="match status" value="1"/>
</dbReference>
<evidence type="ECO:0000255" key="1">
    <source>
        <dbReference type="HAMAP-Rule" id="MF_00049"/>
    </source>
</evidence>
<name>SYL_STAEQ</name>
<feature type="chain" id="PRO_0000152089" description="Leucine--tRNA ligase">
    <location>
        <begin position="1"/>
        <end position="804"/>
    </location>
</feature>
<feature type="short sequence motif" description="'HIGH' region">
    <location>
        <begin position="40"/>
        <end position="51"/>
    </location>
</feature>
<feature type="short sequence motif" description="'KMSKS' region">
    <location>
        <begin position="576"/>
        <end position="580"/>
    </location>
</feature>
<feature type="binding site" evidence="1">
    <location>
        <position position="579"/>
    </location>
    <ligand>
        <name>ATP</name>
        <dbReference type="ChEBI" id="CHEBI:30616"/>
    </ligand>
</feature>
<protein>
    <recommendedName>
        <fullName evidence="1">Leucine--tRNA ligase</fullName>
        <ecNumber evidence="1">6.1.1.4</ecNumber>
    </recommendedName>
    <alternativeName>
        <fullName evidence="1">Leucyl-tRNA synthetase</fullName>
        <shortName evidence="1">LeuRS</shortName>
    </alternativeName>
</protein>
<accession>Q5HNF1</accession>